<dbReference type="EC" id="4.2.1.19" evidence="1"/>
<dbReference type="EMBL" id="CP000394">
    <property type="protein sequence ID" value="ABI63133.1"/>
    <property type="molecule type" value="Genomic_DNA"/>
</dbReference>
<dbReference type="RefSeq" id="WP_011632935.1">
    <property type="nucleotide sequence ID" value="NC_008343.2"/>
</dbReference>
<dbReference type="SMR" id="Q0BPW9"/>
<dbReference type="STRING" id="391165.GbCGDNIH1_2235"/>
<dbReference type="KEGG" id="gbe:GbCGDNIH1_2235"/>
<dbReference type="eggNOG" id="COG0131">
    <property type="taxonomic scope" value="Bacteria"/>
</dbReference>
<dbReference type="HOGENOM" id="CLU_044308_2_0_5"/>
<dbReference type="OrthoDB" id="9813612at2"/>
<dbReference type="UniPathway" id="UPA00031">
    <property type="reaction ID" value="UER00011"/>
</dbReference>
<dbReference type="Proteomes" id="UP000001963">
    <property type="component" value="Chromosome"/>
</dbReference>
<dbReference type="GO" id="GO:0005737">
    <property type="term" value="C:cytoplasm"/>
    <property type="evidence" value="ECO:0007669"/>
    <property type="project" value="UniProtKB-SubCell"/>
</dbReference>
<dbReference type="GO" id="GO:0004424">
    <property type="term" value="F:imidazoleglycerol-phosphate dehydratase activity"/>
    <property type="evidence" value="ECO:0007669"/>
    <property type="project" value="UniProtKB-UniRule"/>
</dbReference>
<dbReference type="GO" id="GO:0000105">
    <property type="term" value="P:L-histidine biosynthetic process"/>
    <property type="evidence" value="ECO:0007669"/>
    <property type="project" value="UniProtKB-UniRule"/>
</dbReference>
<dbReference type="CDD" id="cd07914">
    <property type="entry name" value="IGPD"/>
    <property type="match status" value="1"/>
</dbReference>
<dbReference type="FunFam" id="3.30.230.40:FF:000001">
    <property type="entry name" value="Imidazoleglycerol-phosphate dehydratase HisB"/>
    <property type="match status" value="1"/>
</dbReference>
<dbReference type="FunFam" id="3.30.230.40:FF:000003">
    <property type="entry name" value="Imidazoleglycerol-phosphate dehydratase HisB"/>
    <property type="match status" value="1"/>
</dbReference>
<dbReference type="Gene3D" id="3.30.230.40">
    <property type="entry name" value="Imidazole glycerol phosphate dehydratase, domain 1"/>
    <property type="match status" value="2"/>
</dbReference>
<dbReference type="HAMAP" id="MF_00076">
    <property type="entry name" value="HisB"/>
    <property type="match status" value="1"/>
</dbReference>
<dbReference type="InterPro" id="IPR038494">
    <property type="entry name" value="IGPD_sf"/>
</dbReference>
<dbReference type="InterPro" id="IPR000807">
    <property type="entry name" value="ImidazoleglycerolP_deHydtase"/>
</dbReference>
<dbReference type="InterPro" id="IPR020565">
    <property type="entry name" value="ImidazoleglycerP_deHydtase_CS"/>
</dbReference>
<dbReference type="InterPro" id="IPR020568">
    <property type="entry name" value="Ribosomal_Su5_D2-typ_SF"/>
</dbReference>
<dbReference type="NCBIfam" id="NF002109">
    <property type="entry name" value="PRK00951.1-5"/>
    <property type="match status" value="1"/>
</dbReference>
<dbReference type="NCBIfam" id="NF002111">
    <property type="entry name" value="PRK00951.2-1"/>
    <property type="match status" value="1"/>
</dbReference>
<dbReference type="NCBIfam" id="NF002114">
    <property type="entry name" value="PRK00951.2-4"/>
    <property type="match status" value="1"/>
</dbReference>
<dbReference type="PANTHER" id="PTHR23133:SF2">
    <property type="entry name" value="IMIDAZOLEGLYCEROL-PHOSPHATE DEHYDRATASE"/>
    <property type="match status" value="1"/>
</dbReference>
<dbReference type="PANTHER" id="PTHR23133">
    <property type="entry name" value="IMIDAZOLEGLYCEROL-PHOSPHATE DEHYDRATASE HIS7"/>
    <property type="match status" value="1"/>
</dbReference>
<dbReference type="Pfam" id="PF00475">
    <property type="entry name" value="IGPD"/>
    <property type="match status" value="1"/>
</dbReference>
<dbReference type="SUPFAM" id="SSF54211">
    <property type="entry name" value="Ribosomal protein S5 domain 2-like"/>
    <property type="match status" value="2"/>
</dbReference>
<dbReference type="PROSITE" id="PS00954">
    <property type="entry name" value="IGP_DEHYDRATASE_1"/>
    <property type="match status" value="1"/>
</dbReference>
<dbReference type="PROSITE" id="PS00955">
    <property type="entry name" value="IGP_DEHYDRATASE_2"/>
    <property type="match status" value="1"/>
</dbReference>
<evidence type="ECO:0000255" key="1">
    <source>
        <dbReference type="HAMAP-Rule" id="MF_00076"/>
    </source>
</evidence>
<accession>Q0BPW9</accession>
<protein>
    <recommendedName>
        <fullName evidence="1">Imidazoleglycerol-phosphate dehydratase</fullName>
        <shortName evidence="1">IGPD</shortName>
        <ecNumber evidence="1">4.2.1.19</ecNumber>
    </recommendedName>
</protein>
<keyword id="KW-0028">Amino-acid biosynthesis</keyword>
<keyword id="KW-0963">Cytoplasm</keyword>
<keyword id="KW-0368">Histidine biosynthesis</keyword>
<keyword id="KW-0456">Lyase</keyword>
<keyword id="KW-1185">Reference proteome</keyword>
<organism>
    <name type="scientific">Granulibacter bethesdensis (strain ATCC BAA-1260 / CGDNIH1)</name>
    <dbReference type="NCBI Taxonomy" id="391165"/>
    <lineage>
        <taxon>Bacteria</taxon>
        <taxon>Pseudomonadati</taxon>
        <taxon>Pseudomonadota</taxon>
        <taxon>Alphaproteobacteria</taxon>
        <taxon>Acetobacterales</taxon>
        <taxon>Acetobacteraceae</taxon>
        <taxon>Granulibacter</taxon>
    </lineage>
</organism>
<sequence length="196" mass="21164">MTRQATIDRTTSETSIRLSIDLDGTGQTDIATGIGFLDHMLTALARHALLDLTIRATSDLHIDDHHTTEDVGIVLGQALRQALGDKKGIRRFGHAIVPMDEALAEAAIDLSGRAHVAWSVPFLQSKVGTMDTELFEEFFRAFGGNALMTLHVTLKAGTNTHHVAEACFKAVARALRMAVERDPRVGDAIPSTKGAL</sequence>
<name>HIS7_GRABC</name>
<feature type="chain" id="PRO_1000010282" description="Imidazoleglycerol-phosphate dehydratase">
    <location>
        <begin position="1"/>
        <end position="196"/>
    </location>
</feature>
<reference key="1">
    <citation type="journal article" date="2007" name="J. Bacteriol.">
        <title>Genome sequence analysis of the emerging human pathogenic acetic acid bacterium Granulibacter bethesdensis.</title>
        <authorList>
            <person name="Greenberg D.E."/>
            <person name="Porcella S.F."/>
            <person name="Zelazny A.M."/>
            <person name="Virtaneva K."/>
            <person name="Sturdevant D.E."/>
            <person name="Kupko J.J. III"/>
            <person name="Barbian K.D."/>
            <person name="Babar A."/>
            <person name="Dorward D.W."/>
            <person name="Holland S.M."/>
        </authorList>
    </citation>
    <scope>NUCLEOTIDE SEQUENCE [LARGE SCALE GENOMIC DNA]</scope>
    <source>
        <strain>ATCC BAA-1260 / CGDNIH1</strain>
    </source>
</reference>
<proteinExistence type="inferred from homology"/>
<comment type="catalytic activity">
    <reaction evidence="1">
        <text>D-erythro-1-(imidazol-4-yl)glycerol 3-phosphate = 3-(imidazol-4-yl)-2-oxopropyl phosphate + H2O</text>
        <dbReference type="Rhea" id="RHEA:11040"/>
        <dbReference type="ChEBI" id="CHEBI:15377"/>
        <dbReference type="ChEBI" id="CHEBI:57766"/>
        <dbReference type="ChEBI" id="CHEBI:58278"/>
        <dbReference type="EC" id="4.2.1.19"/>
    </reaction>
</comment>
<comment type="pathway">
    <text evidence="1">Amino-acid biosynthesis; L-histidine biosynthesis; L-histidine from 5-phospho-alpha-D-ribose 1-diphosphate: step 6/9.</text>
</comment>
<comment type="subcellular location">
    <subcellularLocation>
        <location evidence="1">Cytoplasm</location>
    </subcellularLocation>
</comment>
<comment type="similarity">
    <text evidence="1">Belongs to the imidazoleglycerol-phosphate dehydratase family.</text>
</comment>
<gene>
    <name evidence="1" type="primary">hisB</name>
    <name type="ordered locus">GbCGDNIH1_2235</name>
</gene>